<feature type="chain" id="PRO_0000375865" description="Chromatin-remodeling ATPase INO80">
    <location>
        <begin position="1"/>
        <end position="1507"/>
    </location>
</feature>
<feature type="domain" description="DBINO" evidence="4">
    <location>
        <begin position="350"/>
        <end position="475"/>
    </location>
</feature>
<feature type="domain" description="Helicase ATP-binding" evidence="2">
    <location>
        <begin position="598"/>
        <end position="769"/>
    </location>
</feature>
<feature type="domain" description="Helicase C-terminal" evidence="3">
    <location>
        <begin position="1210"/>
        <end position="1360"/>
    </location>
</feature>
<feature type="region of interest" description="Disordered" evidence="5">
    <location>
        <begin position="30"/>
        <end position="82"/>
    </location>
</feature>
<feature type="region of interest" description="Disordered" evidence="5">
    <location>
        <begin position="428"/>
        <end position="452"/>
    </location>
</feature>
<feature type="region of interest" description="Disordered" evidence="5">
    <location>
        <begin position="1415"/>
        <end position="1507"/>
    </location>
</feature>
<feature type="compositionally biased region" description="Polar residues" evidence="5">
    <location>
        <begin position="38"/>
        <end position="67"/>
    </location>
</feature>
<feature type="compositionally biased region" description="Basic and acidic residues" evidence="5">
    <location>
        <begin position="428"/>
        <end position="450"/>
    </location>
</feature>
<feature type="compositionally biased region" description="Polar residues" evidence="5">
    <location>
        <begin position="1491"/>
        <end position="1507"/>
    </location>
</feature>
<feature type="binding site" evidence="2">
    <location>
        <begin position="611"/>
        <end position="618"/>
    </location>
    <ligand>
        <name>ATP</name>
        <dbReference type="ChEBI" id="CHEBI:30616"/>
    </ligand>
</feature>
<dbReference type="EC" id="3.6.4.-" evidence="1"/>
<dbReference type="EMBL" id="AL137080">
    <property type="protein sequence ID" value="CAB68136.1"/>
    <property type="status" value="ALT_SEQ"/>
    <property type="molecule type" value="Genomic_DNA"/>
</dbReference>
<dbReference type="EMBL" id="CP002686">
    <property type="protein sequence ID" value="AEE79637.1"/>
    <property type="molecule type" value="Genomic_DNA"/>
</dbReference>
<dbReference type="EMBL" id="CP002686">
    <property type="protein sequence ID" value="ANM65731.1"/>
    <property type="molecule type" value="Genomic_DNA"/>
</dbReference>
<dbReference type="EMBL" id="AY080695">
    <property type="protein sequence ID" value="AAL86315.1"/>
    <property type="molecule type" value="mRNA"/>
</dbReference>
<dbReference type="PIR" id="T45808">
    <property type="entry name" value="T45808"/>
</dbReference>
<dbReference type="RefSeq" id="NP_001319776.1">
    <molecule id="Q8RXS6-1"/>
    <property type="nucleotide sequence ID" value="NM_001339850.1"/>
</dbReference>
<dbReference type="RefSeq" id="NP_191289.2">
    <molecule id="Q8RXS6-1"/>
    <property type="nucleotide sequence ID" value="NM_115590.4"/>
</dbReference>
<dbReference type="SMR" id="Q8RXS6"/>
<dbReference type="BioGRID" id="10213">
    <property type="interactions" value="7"/>
</dbReference>
<dbReference type="FunCoup" id="Q8RXS6">
    <property type="interactions" value="4320"/>
</dbReference>
<dbReference type="STRING" id="3702.Q8RXS6"/>
<dbReference type="iPTMnet" id="Q8RXS6"/>
<dbReference type="PaxDb" id="3702-AT3G57300.2"/>
<dbReference type="ProteomicsDB" id="248460">
    <molecule id="Q8RXS6-1"/>
</dbReference>
<dbReference type="EnsemblPlants" id="AT3G57300.1">
    <molecule id="Q8RXS6-1"/>
    <property type="protein sequence ID" value="AT3G57300.1"/>
    <property type="gene ID" value="AT3G57300"/>
</dbReference>
<dbReference type="EnsemblPlants" id="AT3G57300.4">
    <molecule id="Q8RXS6-1"/>
    <property type="protein sequence ID" value="AT3G57300.4"/>
    <property type="gene ID" value="AT3G57300"/>
</dbReference>
<dbReference type="GeneID" id="824897"/>
<dbReference type="Gramene" id="AT3G57300.1">
    <molecule id="Q8RXS6-1"/>
    <property type="protein sequence ID" value="AT3G57300.1"/>
    <property type="gene ID" value="AT3G57300"/>
</dbReference>
<dbReference type="Gramene" id="AT3G57300.4">
    <molecule id="Q8RXS6-1"/>
    <property type="protein sequence ID" value="AT3G57300.4"/>
    <property type="gene ID" value="AT3G57300"/>
</dbReference>
<dbReference type="KEGG" id="ath:AT3G57300"/>
<dbReference type="Araport" id="AT3G57300"/>
<dbReference type="TAIR" id="AT3G57300">
    <property type="gene designation" value="INO80"/>
</dbReference>
<dbReference type="eggNOG" id="KOG0388">
    <property type="taxonomic scope" value="Eukaryota"/>
</dbReference>
<dbReference type="HOGENOM" id="CLU_000315_20_2_1"/>
<dbReference type="InParanoid" id="Q8RXS6"/>
<dbReference type="PhylomeDB" id="Q8RXS6"/>
<dbReference type="PRO" id="PR:Q8RXS6"/>
<dbReference type="Proteomes" id="UP000006548">
    <property type="component" value="Chromosome 3"/>
</dbReference>
<dbReference type="ExpressionAtlas" id="Q8RXS6">
    <property type="expression patterns" value="baseline and differential"/>
</dbReference>
<dbReference type="GO" id="GO:0005634">
    <property type="term" value="C:nucleus"/>
    <property type="evidence" value="ECO:0007669"/>
    <property type="project" value="UniProtKB-SubCell"/>
</dbReference>
<dbReference type="GO" id="GO:0005524">
    <property type="term" value="F:ATP binding"/>
    <property type="evidence" value="ECO:0007669"/>
    <property type="project" value="UniProtKB-KW"/>
</dbReference>
<dbReference type="GO" id="GO:0016887">
    <property type="term" value="F:ATP hydrolysis activity"/>
    <property type="evidence" value="ECO:0007669"/>
    <property type="project" value="RHEA"/>
</dbReference>
<dbReference type="GO" id="GO:0003677">
    <property type="term" value="F:DNA binding"/>
    <property type="evidence" value="ECO:0007669"/>
    <property type="project" value="UniProtKB-KW"/>
</dbReference>
<dbReference type="GO" id="GO:0006281">
    <property type="term" value="P:DNA repair"/>
    <property type="evidence" value="ECO:0007669"/>
    <property type="project" value="UniProtKB-KW"/>
</dbReference>
<dbReference type="CDD" id="cd18793">
    <property type="entry name" value="SF2_C_SNF"/>
    <property type="match status" value="1"/>
</dbReference>
<dbReference type="FunFam" id="3.40.50.300:FF:001066">
    <property type="entry name" value="DNA helicase INO80-like protein"/>
    <property type="match status" value="1"/>
</dbReference>
<dbReference type="FunFam" id="3.40.50.10810:FF:000006">
    <property type="entry name" value="Putative DNA helicase INO80"/>
    <property type="match status" value="1"/>
</dbReference>
<dbReference type="Gene3D" id="3.40.50.300">
    <property type="entry name" value="P-loop containing nucleotide triphosphate hydrolases"/>
    <property type="match status" value="1"/>
</dbReference>
<dbReference type="Gene3D" id="3.40.50.10810">
    <property type="entry name" value="Tandem AAA-ATPase domain"/>
    <property type="match status" value="1"/>
</dbReference>
<dbReference type="InterPro" id="IPR020838">
    <property type="entry name" value="DBINO"/>
</dbReference>
<dbReference type="InterPro" id="IPR014001">
    <property type="entry name" value="Helicase_ATP-bd"/>
</dbReference>
<dbReference type="InterPro" id="IPR001650">
    <property type="entry name" value="Helicase_C-like"/>
</dbReference>
<dbReference type="InterPro" id="IPR050520">
    <property type="entry name" value="INO80/SWR1_helicase"/>
</dbReference>
<dbReference type="InterPro" id="IPR027417">
    <property type="entry name" value="P-loop_NTPase"/>
</dbReference>
<dbReference type="InterPro" id="IPR038718">
    <property type="entry name" value="SNF2-like_sf"/>
</dbReference>
<dbReference type="InterPro" id="IPR049730">
    <property type="entry name" value="SNF2/RAD54-like_C"/>
</dbReference>
<dbReference type="InterPro" id="IPR000330">
    <property type="entry name" value="SNF2_N"/>
</dbReference>
<dbReference type="PANTHER" id="PTHR45685:SF2">
    <property type="entry name" value="CHROMATIN-REMODELING ATPASE INO80"/>
    <property type="match status" value="1"/>
</dbReference>
<dbReference type="PANTHER" id="PTHR45685">
    <property type="entry name" value="HELICASE SRCAP-RELATED"/>
    <property type="match status" value="1"/>
</dbReference>
<dbReference type="Pfam" id="PF13892">
    <property type="entry name" value="DBINO"/>
    <property type="match status" value="1"/>
</dbReference>
<dbReference type="Pfam" id="PF00271">
    <property type="entry name" value="Helicase_C"/>
    <property type="match status" value="1"/>
</dbReference>
<dbReference type="Pfam" id="PF00176">
    <property type="entry name" value="SNF2-rel_dom"/>
    <property type="match status" value="1"/>
</dbReference>
<dbReference type="SMART" id="SM00487">
    <property type="entry name" value="DEXDc"/>
    <property type="match status" value="1"/>
</dbReference>
<dbReference type="SMART" id="SM00490">
    <property type="entry name" value="HELICc"/>
    <property type="match status" value="1"/>
</dbReference>
<dbReference type="SUPFAM" id="SSF52540">
    <property type="entry name" value="P-loop containing nucleoside triphosphate hydrolases"/>
    <property type="match status" value="2"/>
</dbReference>
<dbReference type="PROSITE" id="PS51413">
    <property type="entry name" value="DBINO"/>
    <property type="match status" value="1"/>
</dbReference>
<dbReference type="PROSITE" id="PS51192">
    <property type="entry name" value="HELICASE_ATP_BIND_1"/>
    <property type="match status" value="1"/>
</dbReference>
<dbReference type="PROSITE" id="PS51194">
    <property type="entry name" value="HELICASE_CTER"/>
    <property type="match status" value="1"/>
</dbReference>
<sequence>MDPSRRPPKDSPYANLFDLEPLMKFRIPKPEDEVDYYGSSSQDESRSTQGGVVANYSNGSKSRMNASSKKRKRWTEAEDAEDDDDLYNQHVTEEHYRSMLGEHVQKFKNRSKETQGNPPHLMGFPVLKSNVGSYRGRKPGNDYHGRFYDMDNSPNFAADVTPHRRGSYHDRDITPKIAYEPSYLDIGDGVIYKIPPSYDKLVASLNLPSFSDIHVEEFYLKGTLDLRSLAELMASDKRSGVRSRNGMGEPRPQYESLQARMKALSPSNSTPNFSLKVSEAAMNSAIPEGSAGSTARTILSEGGVLQVHYVKILEKGDTYEIVKRSLPKKLKAKNDPAVIEKTERDKIRKAWINIVRRDIAKHHRIFTTFHRKLSIDAKRFADGCQREVRMKVGRSYKIPRTAPIRTRKISRDMLLFWKRYDKQMAEERKKQEKEAAEAFKREQEQRESKRQQQRLNFLIKQTELYSHFMQNKTDSNPSEALPIGDENPIDEVLPETSAAEPSEVEDPEEAELKEKVLRAAQDAVSKQKQITDAFDTEYMKLRQTSEMEGPLNDISVSGSSNIDLHNPSTMPVTSTVQTPELFKGTLKEYQMKGLQWLVNCYEQGLNGILADEMGLGKTIQAMAFLAHLAEEKNIWGPFLVVAPASVLNNWADEISRFCPDLKTLPYWGGLQERTILRKNINPKRMYRRDAGFHILITSYQLLVTDEKYFRRVKWQYMVLDEAQAIKSSSSIRWKTLLSFNCRNRLLLTGTPIQNNMAELWALLHFIMPMLFDNHDQFNEWFSKGIENHAEHGGTLNEHQLNRLHAILKPFMLRRVKKDVVSELTTKTEVTVHCKLSSRQQAFYQAIKNKISLAELFDSNRGQFTDKKVLNLMNIVIQLRKVCNHPELFERNEGSSYLYFGVTSNSLLPHPFGELEDVHYSGGQNPIIYKIPKLLHQEVLQNSETFCSSVGRGISRESFLKHFNIYSPEYILKSIFPSDSGVDQVVSGSGAFGFSRLMDLSPSEVGYLALCSVAERLLFSILRWERQFLDELVNSLMESKDGDLSDNNIERVKTKAVTRMLLMPSKVETNFQKRRLSTGPTRPSFEALVISHQDRFLSSIKLLHSAYTYIPKARAPPVSIHCSDRNSAYRVTEELHQPWLKRLLIGFARTSEANGPRKPNSFPHPLIQEIDSELPVVQPALQLTHRIFGSCPPMQSFDPAKLLTDSGKLQTLDILLKRLRAGNHRVLLFAQMTKMLNILEDYMNYRKYKYLRLDGSSTIMDRRDMVRDFQHRSDIFVFLLSTRAGGLGINLTAADTVIFYESDWNPTLDLQAMDRAHRLGQTKDVTVYRLICKETVEEKILHRASQKNTVQQLVMTGGHVQGDDFLGAADVVSLLMDDAEAAQLEQKFRELPLQVKDRQKKKTKRIRIDAEGDATLEELEDVDRQDNGQEPLEEPEKPKSSNKKRRAASNPKARAPQKAKEEANGEDTPQRTKRVKRQTKSINESLEPVFSASVTESNKGFDPSSSAN</sequence>
<evidence type="ECO:0000250" key="1">
    <source>
        <dbReference type="UniProtKB" id="Q9ULG1"/>
    </source>
</evidence>
<evidence type="ECO:0000255" key="2">
    <source>
        <dbReference type="PROSITE-ProRule" id="PRU00541"/>
    </source>
</evidence>
<evidence type="ECO:0000255" key="3">
    <source>
        <dbReference type="PROSITE-ProRule" id="PRU00542"/>
    </source>
</evidence>
<evidence type="ECO:0000255" key="4">
    <source>
        <dbReference type="PROSITE-ProRule" id="PRU00746"/>
    </source>
</evidence>
<evidence type="ECO:0000256" key="5">
    <source>
        <dbReference type="SAM" id="MobiDB-lite"/>
    </source>
</evidence>
<evidence type="ECO:0000269" key="6">
    <source>
    </source>
</evidence>
<evidence type="ECO:0000269" key="7">
    <source>
    </source>
</evidence>
<evidence type="ECO:0000303" key="8">
    <source>
    </source>
</evidence>
<evidence type="ECO:0000303" key="9">
    <source>
    </source>
</evidence>
<evidence type="ECO:0000305" key="10"/>
<evidence type="ECO:0000312" key="11">
    <source>
        <dbReference type="Araport" id="AT3G57300"/>
    </source>
</evidence>
<evidence type="ECO:0000312" key="12">
    <source>
        <dbReference type="EMBL" id="CAB68136.1"/>
    </source>
</evidence>
<proteinExistence type="evidence at protein level"/>
<reference key="1">
    <citation type="journal article" date="2000" name="Nature">
        <title>Sequence and analysis of chromosome 3 of the plant Arabidopsis thaliana.</title>
        <authorList>
            <person name="Salanoubat M."/>
            <person name="Lemcke K."/>
            <person name="Rieger M."/>
            <person name="Ansorge W."/>
            <person name="Unseld M."/>
            <person name="Fartmann B."/>
            <person name="Valle G."/>
            <person name="Bloecker H."/>
            <person name="Perez-Alonso M."/>
            <person name="Obermaier B."/>
            <person name="Delseny M."/>
            <person name="Boutry M."/>
            <person name="Grivell L.A."/>
            <person name="Mache R."/>
            <person name="Puigdomenech P."/>
            <person name="De Simone V."/>
            <person name="Choisne N."/>
            <person name="Artiguenave F."/>
            <person name="Robert C."/>
            <person name="Brottier P."/>
            <person name="Wincker P."/>
            <person name="Cattolico L."/>
            <person name="Weissenbach J."/>
            <person name="Saurin W."/>
            <person name="Quetier F."/>
            <person name="Schaefer M."/>
            <person name="Mueller-Auer S."/>
            <person name="Gabel C."/>
            <person name="Fuchs M."/>
            <person name="Benes V."/>
            <person name="Wurmbach E."/>
            <person name="Drzonek H."/>
            <person name="Erfle H."/>
            <person name="Jordan N."/>
            <person name="Bangert S."/>
            <person name="Wiedelmann R."/>
            <person name="Kranz H."/>
            <person name="Voss H."/>
            <person name="Holland R."/>
            <person name="Brandt P."/>
            <person name="Nyakatura G."/>
            <person name="Vezzi A."/>
            <person name="D'Angelo M."/>
            <person name="Pallavicini A."/>
            <person name="Toppo S."/>
            <person name="Simionati B."/>
            <person name="Conrad A."/>
            <person name="Hornischer K."/>
            <person name="Kauer G."/>
            <person name="Loehnert T.-H."/>
            <person name="Nordsiek G."/>
            <person name="Reichelt J."/>
            <person name="Scharfe M."/>
            <person name="Schoen O."/>
            <person name="Bargues M."/>
            <person name="Terol J."/>
            <person name="Climent J."/>
            <person name="Navarro P."/>
            <person name="Collado C."/>
            <person name="Perez-Perez A."/>
            <person name="Ottenwaelder B."/>
            <person name="Duchemin D."/>
            <person name="Cooke R."/>
            <person name="Laudie M."/>
            <person name="Berger-Llauro C."/>
            <person name="Purnelle B."/>
            <person name="Masuy D."/>
            <person name="de Haan M."/>
            <person name="Maarse A.C."/>
            <person name="Alcaraz J.-P."/>
            <person name="Cottet A."/>
            <person name="Casacuberta E."/>
            <person name="Monfort A."/>
            <person name="Argiriou A."/>
            <person name="Flores M."/>
            <person name="Liguori R."/>
            <person name="Vitale D."/>
            <person name="Mannhaupt G."/>
            <person name="Haase D."/>
            <person name="Schoof H."/>
            <person name="Rudd S."/>
            <person name="Zaccaria P."/>
            <person name="Mewes H.-W."/>
            <person name="Mayer K.F.X."/>
            <person name="Kaul S."/>
            <person name="Town C.D."/>
            <person name="Koo H.L."/>
            <person name="Tallon L.J."/>
            <person name="Jenkins J."/>
            <person name="Rooney T."/>
            <person name="Rizzo M."/>
            <person name="Walts A."/>
            <person name="Utterback T."/>
            <person name="Fujii C.Y."/>
            <person name="Shea T.P."/>
            <person name="Creasy T.H."/>
            <person name="Haas B."/>
            <person name="Maiti R."/>
            <person name="Wu D."/>
            <person name="Peterson J."/>
            <person name="Van Aken S."/>
            <person name="Pai G."/>
            <person name="Militscher J."/>
            <person name="Sellers P."/>
            <person name="Gill J.E."/>
            <person name="Feldblyum T.V."/>
            <person name="Preuss D."/>
            <person name="Lin X."/>
            <person name="Nierman W.C."/>
            <person name="Salzberg S.L."/>
            <person name="White O."/>
            <person name="Venter J.C."/>
            <person name="Fraser C.M."/>
            <person name="Kaneko T."/>
            <person name="Nakamura Y."/>
            <person name="Sato S."/>
            <person name="Kato T."/>
            <person name="Asamizu E."/>
            <person name="Sasamoto S."/>
            <person name="Kimura T."/>
            <person name="Idesawa K."/>
            <person name="Kawashima K."/>
            <person name="Kishida Y."/>
            <person name="Kiyokawa C."/>
            <person name="Kohara M."/>
            <person name="Matsumoto M."/>
            <person name="Matsuno A."/>
            <person name="Muraki A."/>
            <person name="Nakayama S."/>
            <person name="Nakazaki N."/>
            <person name="Shinpo S."/>
            <person name="Takeuchi C."/>
            <person name="Wada T."/>
            <person name="Watanabe A."/>
            <person name="Yamada M."/>
            <person name="Yasuda M."/>
            <person name="Tabata S."/>
        </authorList>
    </citation>
    <scope>NUCLEOTIDE SEQUENCE [LARGE SCALE GENOMIC DNA]</scope>
    <source>
        <strain>cv. Columbia</strain>
    </source>
</reference>
<reference key="2">
    <citation type="journal article" date="2017" name="Plant J.">
        <title>Araport11: a complete reannotation of the Arabidopsis thaliana reference genome.</title>
        <authorList>
            <person name="Cheng C.Y."/>
            <person name="Krishnakumar V."/>
            <person name="Chan A.P."/>
            <person name="Thibaud-Nissen F."/>
            <person name="Schobel S."/>
            <person name="Town C.D."/>
        </authorList>
    </citation>
    <scope>GENOME REANNOTATION</scope>
    <source>
        <strain>cv. Columbia</strain>
    </source>
</reference>
<reference key="3">
    <citation type="journal article" date="2003" name="Science">
        <title>Empirical analysis of transcriptional activity in the Arabidopsis genome.</title>
        <authorList>
            <person name="Yamada K."/>
            <person name="Lim J."/>
            <person name="Dale J.M."/>
            <person name="Chen H."/>
            <person name="Shinn P."/>
            <person name="Palm C.J."/>
            <person name="Southwick A.M."/>
            <person name="Wu H.C."/>
            <person name="Kim C.J."/>
            <person name="Nguyen M."/>
            <person name="Pham P.K."/>
            <person name="Cheuk R.F."/>
            <person name="Karlin-Newmann G."/>
            <person name="Liu S.X."/>
            <person name="Lam B."/>
            <person name="Sakano H."/>
            <person name="Wu T."/>
            <person name="Yu G."/>
            <person name="Miranda M."/>
            <person name="Quach H.L."/>
            <person name="Tripp M."/>
            <person name="Chang C.H."/>
            <person name="Lee J.M."/>
            <person name="Toriumi M.J."/>
            <person name="Chan M.M."/>
            <person name="Tang C.C."/>
            <person name="Onodera C.S."/>
            <person name="Deng J.M."/>
            <person name="Akiyama K."/>
            <person name="Ansari Y."/>
            <person name="Arakawa T."/>
            <person name="Banh J."/>
            <person name="Banno F."/>
            <person name="Bowser L."/>
            <person name="Brooks S.Y."/>
            <person name="Carninci P."/>
            <person name="Chao Q."/>
            <person name="Choy N."/>
            <person name="Enju A."/>
            <person name="Goldsmith A.D."/>
            <person name="Gurjal M."/>
            <person name="Hansen N.F."/>
            <person name="Hayashizaki Y."/>
            <person name="Johnson-Hopson C."/>
            <person name="Hsuan V.W."/>
            <person name="Iida K."/>
            <person name="Karnes M."/>
            <person name="Khan S."/>
            <person name="Koesema E."/>
            <person name="Ishida J."/>
            <person name="Jiang P.X."/>
            <person name="Jones T."/>
            <person name="Kawai J."/>
            <person name="Kamiya A."/>
            <person name="Meyers C."/>
            <person name="Nakajima M."/>
            <person name="Narusaka M."/>
            <person name="Seki M."/>
            <person name="Sakurai T."/>
            <person name="Satou M."/>
            <person name="Tamse R."/>
            <person name="Vaysberg M."/>
            <person name="Wallender E.K."/>
            <person name="Wong C."/>
            <person name="Yamamura Y."/>
            <person name="Yuan S."/>
            <person name="Shinozaki K."/>
            <person name="Davis R.W."/>
            <person name="Theologis A."/>
            <person name="Ecker J.R."/>
        </authorList>
    </citation>
    <scope>NUCLEOTIDE SEQUENCE [LARGE SCALE MRNA]</scope>
    <source>
        <strain>cv. Columbia</strain>
    </source>
</reference>
<reference key="4">
    <citation type="journal article" date="2004" name="Mol. Cell">
        <title>The INO80 protein controls homologous recombination in Arabidopsis thaliana.</title>
        <authorList>
            <person name="Fritsch O."/>
            <person name="Benvenuto G."/>
            <person name="Bowler C."/>
            <person name="Molinier J."/>
            <person name="Hohn B."/>
        </authorList>
    </citation>
    <scope>FUNCTION</scope>
    <scope>INDUCTION</scope>
    <scope>DISRUPTION PHENOTYPE</scope>
</reference>
<reference key="5">
    <citation type="journal article" date="2013" name="PLoS ONE">
        <title>Genome-wide comparative in silico analysis of the RNA helicase gene family in Zea mays and Glycine max: a comparison with Arabidopsis and Oryza sativa.</title>
        <authorList>
            <person name="Xu R."/>
            <person name="Zhang S."/>
            <person name="Huang J."/>
            <person name="Zheng C."/>
        </authorList>
    </citation>
    <scope>GENE FAMILY</scope>
</reference>
<reference key="6">
    <citation type="journal article" date="2019" name="Elife">
        <title>Epigenetic silencing of a multifunctional plant stress regulator.</title>
        <authorList>
            <person name="Zander M."/>
            <person name="Willige B.C."/>
            <person name="He Y."/>
            <person name="Nguyen T.A."/>
            <person name="Langford A.E."/>
            <person name="Nehring R."/>
            <person name="Howell E."/>
            <person name="McGrath R."/>
            <person name="Bartlett A."/>
            <person name="Castanon R."/>
            <person name="Nery J.R."/>
            <person name="Chen H."/>
            <person name="Zhang Z."/>
            <person name="Jupe F."/>
            <person name="Stepanova A."/>
            <person name="Schmitz R.J."/>
            <person name="Lewsey M.G."/>
            <person name="Chory J."/>
            <person name="Ecker J.R."/>
        </authorList>
    </citation>
    <scope>FUNCTION</scope>
    <scope>DISRUPTION PHENOTYPE</scope>
    <scope>INTERACTION WITH EIN6</scope>
    <source>
        <strain>cv. Columbia</strain>
        <strain>cv. Landsberg erecta</strain>
    </source>
</reference>
<protein>
    <recommendedName>
        <fullName evidence="8">Chromatin-remodeling ATPase INO80</fullName>
        <shortName evidence="8">AtINO80</shortName>
        <ecNumber evidence="1">3.6.4.-</ecNumber>
    </recommendedName>
    <alternativeName>
        <fullName evidence="10">DNA helicase-related INO80 complex homolog 1</fullName>
    </alternativeName>
</protein>
<organism>
    <name type="scientific">Arabidopsis thaliana</name>
    <name type="common">Mouse-ear cress</name>
    <dbReference type="NCBI Taxonomy" id="3702"/>
    <lineage>
        <taxon>Eukaryota</taxon>
        <taxon>Viridiplantae</taxon>
        <taxon>Streptophyta</taxon>
        <taxon>Embryophyta</taxon>
        <taxon>Tracheophyta</taxon>
        <taxon>Spermatophyta</taxon>
        <taxon>Magnoliopsida</taxon>
        <taxon>eudicotyledons</taxon>
        <taxon>Gunneridae</taxon>
        <taxon>Pentapetalae</taxon>
        <taxon>rosids</taxon>
        <taxon>malvids</taxon>
        <taxon>Brassicales</taxon>
        <taxon>Brassicaceae</taxon>
        <taxon>Camelineae</taxon>
        <taxon>Arabidopsis</taxon>
    </lineage>
</organism>
<accession>Q8RXS6</accession>
<accession>Q9M2L7</accession>
<comment type="function">
    <text evidence="1 6 7">ATPase component of the chromatin remodeling INO80 complex which is involved in transcriptional regulation, DNA replication and DNA repair (By similarity). Binds DNA (By similarity). As part of the INO80 complex, remodels chromatin by shifting nucleosomes (By similarity). The INO80 complex controls ethylene-induced H2A.Z eviction dynamics (PubMed:31418686). Positive regulator of homologous recombination, but not an essential component of homologous recombination (PubMed:15525519). Not involved in the illegitimate repair pathway (PubMed:15525519).</text>
</comment>
<comment type="catalytic activity">
    <reaction evidence="1">
        <text>ATP + H2O = ADP + phosphate + H(+)</text>
        <dbReference type="Rhea" id="RHEA:13065"/>
        <dbReference type="ChEBI" id="CHEBI:15377"/>
        <dbReference type="ChEBI" id="CHEBI:15378"/>
        <dbReference type="ChEBI" id="CHEBI:30616"/>
        <dbReference type="ChEBI" id="CHEBI:43474"/>
        <dbReference type="ChEBI" id="CHEBI:456216"/>
    </reaction>
</comment>
<comment type="subunit">
    <text evidence="4 9">Component of the INO80 chromatin-remodeling complex (By similarity). Associates with REF6/EIN6 (PubMed:31418686).</text>
</comment>
<comment type="subcellular location">
    <subcellularLocation>
        <location evidence="4">Nucleus</location>
    </subcellularLocation>
</comment>
<comment type="alternative products">
    <event type="alternative splicing"/>
    <isoform>
        <id>Q8RXS6-1</id>
        <name>1</name>
        <sequence type="displayed"/>
    </isoform>
    <text>A number of isoforms are produced. According to EST sequences.</text>
</comment>
<comment type="induction">
    <text evidence="6">Not induced by methyl methanesulfonate (MMS) treatment.</text>
</comment>
<comment type="domain">
    <text evidence="1">The DBINO region is involved in binding to DNA.</text>
</comment>
<comment type="disruption phenotype">
    <text evidence="6 7">Decreased homologous recombination frequency, but unchanged sensitivity to genotoxic agents and efficiency of T-DNA integration (PubMed:15525519). Differential expression of several genes (PubMed:31418686). Compromised ethylene-induced H2A.Z eviction dynamics (PubMed:31418686). The double mutant ref6-1 ino80-1 is insensitive to ethylene (ET) and exhibits reduced levels of EIN2 associated with a shift of the chromatin landscape to a repressive state at its locus (e.g. H3K27me3 and H2A.Z) (PubMed:31418686).</text>
</comment>
<comment type="similarity">
    <text evidence="10">Belongs to the SNF2/RAD54 helicase family.</text>
</comment>
<comment type="sequence caution" evidence="10">
    <conflict type="erroneous gene model prediction">
        <sequence resource="EMBL-CDS" id="CAB68136"/>
    </conflict>
</comment>
<gene>
    <name evidence="8" type="primary">INO80</name>
    <name evidence="11" type="ordered locus">At3g57300</name>
    <name evidence="12" type="ORF">F28O9.150</name>
</gene>
<keyword id="KW-0010">Activator</keyword>
<keyword id="KW-0025">Alternative splicing</keyword>
<keyword id="KW-0067">ATP-binding</keyword>
<keyword id="KW-0227">DNA damage</keyword>
<keyword id="KW-0234">DNA repair</keyword>
<keyword id="KW-0238">DNA-binding</keyword>
<keyword id="KW-0378">Hydrolase</keyword>
<keyword id="KW-0547">Nucleotide-binding</keyword>
<keyword id="KW-0539">Nucleus</keyword>
<keyword id="KW-1185">Reference proteome</keyword>
<keyword id="KW-0804">Transcription</keyword>
<keyword id="KW-0805">Transcription regulation</keyword>
<name>INO80_ARATH</name>